<dbReference type="EC" id="2.7.1.71" evidence="1"/>
<dbReference type="EMBL" id="BA000040">
    <property type="protein sequence ID" value="BAC45453.1"/>
    <property type="status" value="ALT_INIT"/>
    <property type="molecule type" value="Genomic_DNA"/>
</dbReference>
<dbReference type="RefSeq" id="NP_766828.1">
    <property type="nucleotide sequence ID" value="NC_004463.1"/>
</dbReference>
<dbReference type="RefSeq" id="WP_028175815.1">
    <property type="nucleotide sequence ID" value="NC_004463.1"/>
</dbReference>
<dbReference type="SMR" id="Q89XW7"/>
<dbReference type="FunCoup" id="Q89XW7">
    <property type="interactions" value="665"/>
</dbReference>
<dbReference type="STRING" id="224911.AAV28_40190"/>
<dbReference type="EnsemblBacteria" id="BAC45453">
    <property type="protein sequence ID" value="BAC45453"/>
    <property type="gene ID" value="BAC45453"/>
</dbReference>
<dbReference type="GeneID" id="46495341"/>
<dbReference type="KEGG" id="bja:bll0188"/>
<dbReference type="PATRIC" id="fig|224911.44.peg.8709"/>
<dbReference type="eggNOG" id="COG0703">
    <property type="taxonomic scope" value="Bacteria"/>
</dbReference>
<dbReference type="HOGENOM" id="CLU_057607_1_0_5"/>
<dbReference type="InParanoid" id="Q89XW7"/>
<dbReference type="OrthoDB" id="9800332at2"/>
<dbReference type="UniPathway" id="UPA00053">
    <property type="reaction ID" value="UER00088"/>
</dbReference>
<dbReference type="Proteomes" id="UP000002526">
    <property type="component" value="Chromosome"/>
</dbReference>
<dbReference type="GO" id="GO:0005829">
    <property type="term" value="C:cytosol"/>
    <property type="evidence" value="ECO:0000318"/>
    <property type="project" value="GO_Central"/>
</dbReference>
<dbReference type="GO" id="GO:0005524">
    <property type="term" value="F:ATP binding"/>
    <property type="evidence" value="ECO:0007669"/>
    <property type="project" value="UniProtKB-UniRule"/>
</dbReference>
<dbReference type="GO" id="GO:0000287">
    <property type="term" value="F:magnesium ion binding"/>
    <property type="evidence" value="ECO:0007669"/>
    <property type="project" value="UniProtKB-UniRule"/>
</dbReference>
<dbReference type="GO" id="GO:0004765">
    <property type="term" value="F:shikimate kinase activity"/>
    <property type="evidence" value="ECO:0000318"/>
    <property type="project" value="GO_Central"/>
</dbReference>
<dbReference type="GO" id="GO:0008652">
    <property type="term" value="P:amino acid biosynthetic process"/>
    <property type="evidence" value="ECO:0007669"/>
    <property type="project" value="UniProtKB-KW"/>
</dbReference>
<dbReference type="GO" id="GO:0009073">
    <property type="term" value="P:aromatic amino acid family biosynthetic process"/>
    <property type="evidence" value="ECO:0007669"/>
    <property type="project" value="UniProtKB-KW"/>
</dbReference>
<dbReference type="GO" id="GO:0009423">
    <property type="term" value="P:chorismate biosynthetic process"/>
    <property type="evidence" value="ECO:0007669"/>
    <property type="project" value="UniProtKB-UniRule"/>
</dbReference>
<dbReference type="CDD" id="cd00464">
    <property type="entry name" value="SK"/>
    <property type="match status" value="1"/>
</dbReference>
<dbReference type="FunFam" id="3.40.50.300:FF:003938">
    <property type="entry name" value="Shikimate kinase"/>
    <property type="match status" value="1"/>
</dbReference>
<dbReference type="Gene3D" id="3.40.50.300">
    <property type="entry name" value="P-loop containing nucleotide triphosphate hydrolases"/>
    <property type="match status" value="1"/>
</dbReference>
<dbReference type="HAMAP" id="MF_00109">
    <property type="entry name" value="Shikimate_kinase"/>
    <property type="match status" value="1"/>
</dbReference>
<dbReference type="InterPro" id="IPR027417">
    <property type="entry name" value="P-loop_NTPase"/>
</dbReference>
<dbReference type="InterPro" id="IPR031322">
    <property type="entry name" value="Shikimate/glucono_kinase"/>
</dbReference>
<dbReference type="InterPro" id="IPR000623">
    <property type="entry name" value="Shikimate_kinase/TSH1"/>
</dbReference>
<dbReference type="InterPro" id="IPR023000">
    <property type="entry name" value="Shikimate_kinase_CS"/>
</dbReference>
<dbReference type="NCBIfam" id="NF010552">
    <property type="entry name" value="PRK13946.1"/>
    <property type="match status" value="1"/>
</dbReference>
<dbReference type="PANTHER" id="PTHR21087">
    <property type="entry name" value="SHIKIMATE KINASE"/>
    <property type="match status" value="1"/>
</dbReference>
<dbReference type="PANTHER" id="PTHR21087:SF16">
    <property type="entry name" value="SHIKIMATE KINASE 1, CHLOROPLASTIC"/>
    <property type="match status" value="1"/>
</dbReference>
<dbReference type="Pfam" id="PF01202">
    <property type="entry name" value="SKI"/>
    <property type="match status" value="1"/>
</dbReference>
<dbReference type="PRINTS" id="PR01100">
    <property type="entry name" value="SHIKIMTKNASE"/>
</dbReference>
<dbReference type="SUPFAM" id="SSF52540">
    <property type="entry name" value="P-loop containing nucleoside triphosphate hydrolases"/>
    <property type="match status" value="1"/>
</dbReference>
<dbReference type="PROSITE" id="PS01128">
    <property type="entry name" value="SHIKIMATE_KINASE"/>
    <property type="match status" value="1"/>
</dbReference>
<sequence length="207" mass="22345">MSDAALPIQASPEADILSALGARSIVLVGMMGVGKSTIGRRMAARLKLPFVDADTEIEAAAGMTIPEIFERHGEGHFRDGEARVIARLLDGGPVVLATGGGAFMREETRARIAAKAVSIWLKADHDVIMRRVRRRADRPLLQTADPEGTVTRLLTEREPVYSHADLTIASRDVPHDKIVEECIETLRAHLCGEQAAQPPADVASAVR</sequence>
<accession>Q89XW7</accession>
<proteinExistence type="inferred from homology"/>
<organism>
    <name type="scientific">Bradyrhizobium diazoefficiens (strain JCM 10833 / BCRC 13528 / IAM 13628 / NBRC 14792 / USDA 110)</name>
    <dbReference type="NCBI Taxonomy" id="224911"/>
    <lineage>
        <taxon>Bacteria</taxon>
        <taxon>Pseudomonadati</taxon>
        <taxon>Pseudomonadota</taxon>
        <taxon>Alphaproteobacteria</taxon>
        <taxon>Hyphomicrobiales</taxon>
        <taxon>Nitrobacteraceae</taxon>
        <taxon>Bradyrhizobium</taxon>
    </lineage>
</organism>
<name>AROK_BRADU</name>
<reference key="1">
    <citation type="journal article" date="2002" name="DNA Res.">
        <title>Complete genomic sequence of nitrogen-fixing symbiotic bacterium Bradyrhizobium japonicum USDA110.</title>
        <authorList>
            <person name="Kaneko T."/>
            <person name="Nakamura Y."/>
            <person name="Sato S."/>
            <person name="Minamisawa K."/>
            <person name="Uchiumi T."/>
            <person name="Sasamoto S."/>
            <person name="Watanabe A."/>
            <person name="Idesawa K."/>
            <person name="Iriguchi M."/>
            <person name="Kawashima K."/>
            <person name="Kohara M."/>
            <person name="Matsumoto M."/>
            <person name="Shimpo S."/>
            <person name="Tsuruoka H."/>
            <person name="Wada T."/>
            <person name="Yamada M."/>
            <person name="Tabata S."/>
        </authorList>
    </citation>
    <scope>NUCLEOTIDE SEQUENCE [LARGE SCALE GENOMIC DNA]</scope>
    <source>
        <strain>JCM 10833 / BCRC 13528 / IAM 13628 / NBRC 14792 / USDA 110</strain>
    </source>
</reference>
<protein>
    <recommendedName>
        <fullName evidence="1">Shikimate kinase</fullName>
        <shortName evidence="1">SK</shortName>
        <ecNumber evidence="1">2.7.1.71</ecNumber>
    </recommendedName>
</protein>
<keyword id="KW-0028">Amino-acid biosynthesis</keyword>
<keyword id="KW-0057">Aromatic amino acid biosynthesis</keyword>
<keyword id="KW-0067">ATP-binding</keyword>
<keyword id="KW-0963">Cytoplasm</keyword>
<keyword id="KW-0418">Kinase</keyword>
<keyword id="KW-0460">Magnesium</keyword>
<keyword id="KW-0479">Metal-binding</keyword>
<keyword id="KW-0547">Nucleotide-binding</keyword>
<keyword id="KW-1185">Reference proteome</keyword>
<keyword id="KW-0808">Transferase</keyword>
<evidence type="ECO:0000255" key="1">
    <source>
        <dbReference type="HAMAP-Rule" id="MF_00109"/>
    </source>
</evidence>
<evidence type="ECO:0000305" key="2"/>
<feature type="chain" id="PRO_0000237853" description="Shikimate kinase">
    <location>
        <begin position="1"/>
        <end position="207"/>
    </location>
</feature>
<feature type="binding site" evidence="1">
    <location>
        <begin position="32"/>
        <end position="37"/>
    </location>
    <ligand>
        <name>ATP</name>
        <dbReference type="ChEBI" id="CHEBI:30616"/>
    </ligand>
</feature>
<feature type="binding site" evidence="1">
    <location>
        <position position="36"/>
    </location>
    <ligand>
        <name>Mg(2+)</name>
        <dbReference type="ChEBI" id="CHEBI:18420"/>
    </ligand>
</feature>
<feature type="binding site" evidence="1">
    <location>
        <position position="54"/>
    </location>
    <ligand>
        <name>substrate</name>
    </ligand>
</feature>
<feature type="binding site" evidence="1">
    <location>
        <position position="78"/>
    </location>
    <ligand>
        <name>substrate</name>
    </ligand>
</feature>
<feature type="binding site" evidence="1">
    <location>
        <position position="100"/>
    </location>
    <ligand>
        <name>substrate</name>
    </ligand>
</feature>
<feature type="binding site" evidence="1">
    <location>
        <position position="138"/>
    </location>
    <ligand>
        <name>ATP</name>
        <dbReference type="ChEBI" id="CHEBI:30616"/>
    </ligand>
</feature>
<feature type="binding site" evidence="1">
    <location>
        <position position="157"/>
    </location>
    <ligand>
        <name>substrate</name>
    </ligand>
</feature>
<comment type="function">
    <text evidence="1">Catalyzes the specific phosphorylation of the 3-hydroxyl group of shikimic acid using ATP as a cosubstrate.</text>
</comment>
<comment type="catalytic activity">
    <reaction evidence="1">
        <text>shikimate + ATP = 3-phosphoshikimate + ADP + H(+)</text>
        <dbReference type="Rhea" id="RHEA:13121"/>
        <dbReference type="ChEBI" id="CHEBI:15378"/>
        <dbReference type="ChEBI" id="CHEBI:30616"/>
        <dbReference type="ChEBI" id="CHEBI:36208"/>
        <dbReference type="ChEBI" id="CHEBI:145989"/>
        <dbReference type="ChEBI" id="CHEBI:456216"/>
        <dbReference type="EC" id="2.7.1.71"/>
    </reaction>
</comment>
<comment type="cofactor">
    <cofactor evidence="1">
        <name>Mg(2+)</name>
        <dbReference type="ChEBI" id="CHEBI:18420"/>
    </cofactor>
    <text evidence="1">Binds 1 Mg(2+) ion per subunit.</text>
</comment>
<comment type="pathway">
    <text evidence="1">Metabolic intermediate biosynthesis; chorismate biosynthesis; chorismate from D-erythrose 4-phosphate and phosphoenolpyruvate: step 5/7.</text>
</comment>
<comment type="subunit">
    <text evidence="1">Monomer.</text>
</comment>
<comment type="subcellular location">
    <subcellularLocation>
        <location evidence="1">Cytoplasm</location>
    </subcellularLocation>
</comment>
<comment type="similarity">
    <text evidence="1">Belongs to the shikimate kinase family.</text>
</comment>
<comment type="sequence caution" evidence="2">
    <conflict type="erroneous initiation">
        <sequence resource="EMBL-CDS" id="BAC45453"/>
    </conflict>
</comment>
<gene>
    <name evidence="1" type="primary">aroK</name>
    <name type="ordered locus">bll0188</name>
</gene>